<reference key="1">
    <citation type="journal article" date="2012" name="Stand. Genomic Sci.">
        <title>Complete genome sequence of Polynucleobacter necessarius subsp. asymbioticus type strain (QLW-P1DMWA-1(T)).</title>
        <authorList>
            <person name="Meincke L."/>
            <person name="Copeland A."/>
            <person name="Lapidus A."/>
            <person name="Lucas S."/>
            <person name="Berry K.W."/>
            <person name="Del Rio T.G."/>
            <person name="Hammon N."/>
            <person name="Dalin E."/>
            <person name="Tice H."/>
            <person name="Pitluck S."/>
            <person name="Richardson P."/>
            <person name="Bruce D."/>
            <person name="Goodwin L."/>
            <person name="Han C."/>
            <person name="Tapia R."/>
            <person name="Detter J.C."/>
            <person name="Schmutz J."/>
            <person name="Brettin T."/>
            <person name="Larimer F."/>
            <person name="Land M."/>
            <person name="Hauser L."/>
            <person name="Kyrpides N.C."/>
            <person name="Ivanova N."/>
            <person name="Goker M."/>
            <person name="Woyke T."/>
            <person name="Wu Q.L."/>
            <person name="Pockl M."/>
            <person name="Hahn M.W."/>
            <person name="Klenk H.P."/>
        </authorList>
    </citation>
    <scope>NUCLEOTIDE SEQUENCE [LARGE SCALE GENOMIC DNA]</scope>
    <source>
        <strain>DSM 18221 / CIP 109841 / QLW-P1DMWA-1</strain>
    </source>
</reference>
<comment type="function">
    <text evidence="1">Catalyzes the ATP-dependent phosphorylation of N-acetyl-L-glutamate.</text>
</comment>
<comment type="catalytic activity">
    <reaction evidence="1">
        <text>N-acetyl-L-glutamate + ATP = N-acetyl-L-glutamyl 5-phosphate + ADP</text>
        <dbReference type="Rhea" id="RHEA:14629"/>
        <dbReference type="ChEBI" id="CHEBI:30616"/>
        <dbReference type="ChEBI" id="CHEBI:44337"/>
        <dbReference type="ChEBI" id="CHEBI:57936"/>
        <dbReference type="ChEBI" id="CHEBI:456216"/>
        <dbReference type="EC" id="2.7.2.8"/>
    </reaction>
</comment>
<comment type="pathway">
    <text evidence="1">Amino-acid biosynthesis; L-arginine biosynthesis; N(2)-acetyl-L-ornithine from L-glutamate: step 2/4.</text>
</comment>
<comment type="subcellular location">
    <subcellularLocation>
        <location evidence="1">Cytoplasm</location>
    </subcellularLocation>
</comment>
<comment type="similarity">
    <text evidence="1">Belongs to the acetylglutamate kinase family. ArgB subfamily.</text>
</comment>
<organism>
    <name type="scientific">Polynucleobacter asymbioticus (strain DSM 18221 / CIP 109841 / QLW-P1DMWA-1)</name>
    <name type="common">Polynucleobacter necessarius subsp. asymbioticus</name>
    <dbReference type="NCBI Taxonomy" id="312153"/>
    <lineage>
        <taxon>Bacteria</taxon>
        <taxon>Pseudomonadati</taxon>
        <taxon>Pseudomonadota</taxon>
        <taxon>Betaproteobacteria</taxon>
        <taxon>Burkholderiales</taxon>
        <taxon>Burkholderiaceae</taxon>
        <taxon>Polynucleobacter</taxon>
    </lineage>
</organism>
<accession>A4T0G0</accession>
<name>ARGB_POLAQ</name>
<protein>
    <recommendedName>
        <fullName evidence="1">Acetylglutamate kinase</fullName>
        <ecNumber evidence="1">2.7.2.8</ecNumber>
    </recommendedName>
    <alternativeName>
        <fullName evidence="1">N-acetyl-L-glutamate 5-phosphotransferase</fullName>
    </alternativeName>
    <alternativeName>
        <fullName evidence="1">NAG kinase</fullName>
        <shortName evidence="1">NAGK</shortName>
    </alternativeName>
</protein>
<proteinExistence type="inferred from homology"/>
<feature type="chain" id="PRO_0000335653" description="Acetylglutamate kinase">
    <location>
        <begin position="1"/>
        <end position="300"/>
    </location>
</feature>
<feature type="binding site" evidence="1">
    <location>
        <begin position="73"/>
        <end position="74"/>
    </location>
    <ligand>
        <name>substrate</name>
    </ligand>
</feature>
<feature type="binding site" evidence="1">
    <location>
        <position position="95"/>
    </location>
    <ligand>
        <name>substrate</name>
    </ligand>
</feature>
<feature type="binding site" evidence="1">
    <location>
        <position position="197"/>
    </location>
    <ligand>
        <name>substrate</name>
    </ligand>
</feature>
<feature type="site" description="Transition state stabilizer" evidence="1">
    <location>
        <position position="38"/>
    </location>
</feature>
<feature type="site" description="Transition state stabilizer" evidence="1">
    <location>
        <position position="257"/>
    </location>
</feature>
<gene>
    <name evidence="1" type="primary">argB</name>
    <name type="ordered locus">Pnuc_2013</name>
</gene>
<sequence>MTKHLPTISDISPLLKAEILAEALPYIRAYHGKTIVIKYGGNAMVEERLKESFARDVILLKLVGMNPVVVHGGGPQIDEALKKIGKTGTFIQGMRVTDEETMEVVEWVLGGEVQQDIVMLINHFGGQAVGLTGKDGGLIHAKKMMIPSDAEPGKKIDIGFVGEIEAINPAVVKALQDDAFIPVISPIGFSAEGQAYNINADLVAGKMAEILHAEKLVMMTNIPGVMDKDGKLLTDLTAREIDALFADGTISGGMLPKISSALDAAKSGVNSVHIIDGRIEHSLLLEILTEQAFGTMIRSR</sequence>
<evidence type="ECO:0000255" key="1">
    <source>
        <dbReference type="HAMAP-Rule" id="MF_00082"/>
    </source>
</evidence>
<keyword id="KW-0028">Amino-acid biosynthesis</keyword>
<keyword id="KW-0055">Arginine biosynthesis</keyword>
<keyword id="KW-0067">ATP-binding</keyword>
<keyword id="KW-0963">Cytoplasm</keyword>
<keyword id="KW-0418">Kinase</keyword>
<keyword id="KW-0547">Nucleotide-binding</keyword>
<keyword id="KW-1185">Reference proteome</keyword>
<keyword id="KW-0808">Transferase</keyword>
<dbReference type="EC" id="2.7.2.8" evidence="1"/>
<dbReference type="EMBL" id="CP000655">
    <property type="protein sequence ID" value="ABP35224.1"/>
    <property type="molecule type" value="Genomic_DNA"/>
</dbReference>
<dbReference type="RefSeq" id="WP_011903847.1">
    <property type="nucleotide sequence ID" value="NC_009379.1"/>
</dbReference>
<dbReference type="SMR" id="A4T0G0"/>
<dbReference type="GeneID" id="31482403"/>
<dbReference type="KEGG" id="pnu:Pnuc_2013"/>
<dbReference type="eggNOG" id="COG0548">
    <property type="taxonomic scope" value="Bacteria"/>
</dbReference>
<dbReference type="HOGENOM" id="CLU_053680_0_0_4"/>
<dbReference type="UniPathway" id="UPA00068">
    <property type="reaction ID" value="UER00107"/>
</dbReference>
<dbReference type="Proteomes" id="UP000000231">
    <property type="component" value="Chromosome"/>
</dbReference>
<dbReference type="GO" id="GO:0005737">
    <property type="term" value="C:cytoplasm"/>
    <property type="evidence" value="ECO:0007669"/>
    <property type="project" value="UniProtKB-SubCell"/>
</dbReference>
<dbReference type="GO" id="GO:0003991">
    <property type="term" value="F:acetylglutamate kinase activity"/>
    <property type="evidence" value="ECO:0007669"/>
    <property type="project" value="UniProtKB-UniRule"/>
</dbReference>
<dbReference type="GO" id="GO:0005524">
    <property type="term" value="F:ATP binding"/>
    <property type="evidence" value="ECO:0007669"/>
    <property type="project" value="UniProtKB-UniRule"/>
</dbReference>
<dbReference type="GO" id="GO:0042450">
    <property type="term" value="P:arginine biosynthetic process via ornithine"/>
    <property type="evidence" value="ECO:0007669"/>
    <property type="project" value="UniProtKB-UniRule"/>
</dbReference>
<dbReference type="GO" id="GO:0006526">
    <property type="term" value="P:L-arginine biosynthetic process"/>
    <property type="evidence" value="ECO:0007669"/>
    <property type="project" value="UniProtKB-UniPathway"/>
</dbReference>
<dbReference type="CDD" id="cd04250">
    <property type="entry name" value="AAK_NAGK-C"/>
    <property type="match status" value="1"/>
</dbReference>
<dbReference type="FunFam" id="3.40.1160.10:FF:000004">
    <property type="entry name" value="Acetylglutamate kinase"/>
    <property type="match status" value="1"/>
</dbReference>
<dbReference type="Gene3D" id="3.40.1160.10">
    <property type="entry name" value="Acetylglutamate kinase-like"/>
    <property type="match status" value="1"/>
</dbReference>
<dbReference type="HAMAP" id="MF_00082">
    <property type="entry name" value="ArgB"/>
    <property type="match status" value="1"/>
</dbReference>
<dbReference type="InterPro" id="IPR036393">
    <property type="entry name" value="AceGlu_kinase-like_sf"/>
</dbReference>
<dbReference type="InterPro" id="IPR004662">
    <property type="entry name" value="AcgluKinase_fam"/>
</dbReference>
<dbReference type="InterPro" id="IPR037528">
    <property type="entry name" value="ArgB"/>
</dbReference>
<dbReference type="InterPro" id="IPR001048">
    <property type="entry name" value="Asp/Glu/Uridylate_kinase"/>
</dbReference>
<dbReference type="InterPro" id="IPR001057">
    <property type="entry name" value="Glu/AcGlu_kinase"/>
</dbReference>
<dbReference type="InterPro" id="IPR041727">
    <property type="entry name" value="NAGK-C"/>
</dbReference>
<dbReference type="NCBIfam" id="TIGR00761">
    <property type="entry name" value="argB"/>
    <property type="match status" value="1"/>
</dbReference>
<dbReference type="PANTHER" id="PTHR23342">
    <property type="entry name" value="N-ACETYLGLUTAMATE SYNTHASE"/>
    <property type="match status" value="1"/>
</dbReference>
<dbReference type="PANTHER" id="PTHR23342:SF0">
    <property type="entry name" value="N-ACETYLGLUTAMATE SYNTHASE, MITOCHONDRIAL"/>
    <property type="match status" value="1"/>
</dbReference>
<dbReference type="Pfam" id="PF00696">
    <property type="entry name" value="AA_kinase"/>
    <property type="match status" value="1"/>
</dbReference>
<dbReference type="PIRSF" id="PIRSF000728">
    <property type="entry name" value="NAGK"/>
    <property type="match status" value="1"/>
</dbReference>
<dbReference type="PRINTS" id="PR00474">
    <property type="entry name" value="GLU5KINASE"/>
</dbReference>
<dbReference type="SUPFAM" id="SSF53633">
    <property type="entry name" value="Carbamate kinase-like"/>
    <property type="match status" value="1"/>
</dbReference>